<keyword id="KW-0064">Aspartyl protease</keyword>
<keyword id="KW-0997">Cell inner membrane</keyword>
<keyword id="KW-1003">Cell membrane</keyword>
<keyword id="KW-0378">Hydrolase</keyword>
<keyword id="KW-0472">Membrane</keyword>
<keyword id="KW-0645">Protease</keyword>
<keyword id="KW-1185">Reference proteome</keyword>
<keyword id="KW-0812">Transmembrane</keyword>
<keyword id="KW-1133">Transmembrane helix</keyword>
<sequence length="164" mass="18144">MSQSICSTGLRWLWLVVVVLIIDLGSKYLILQNFALGDTVPLFPSLNLHYARNYGAAFSFLADSGGWQRWFFAGIAIGISVTLVVMMYRSKATQKLNNIAYALIIGGALGNLFDRLWHGFVVDMIDFYVGDWHFATFNLADTAICVGAALIVLEGFLPSKAKKQ</sequence>
<evidence type="ECO:0000255" key="1">
    <source>
        <dbReference type="HAMAP-Rule" id="MF_00161"/>
    </source>
</evidence>
<feature type="chain" id="PRO_0000178780" description="Lipoprotein signal peptidase">
    <location>
        <begin position="1"/>
        <end position="164"/>
    </location>
</feature>
<feature type="transmembrane region" description="Helical" evidence="1">
    <location>
        <begin position="12"/>
        <end position="32"/>
    </location>
</feature>
<feature type="transmembrane region" description="Helical" evidence="1">
    <location>
        <begin position="70"/>
        <end position="90"/>
    </location>
</feature>
<feature type="transmembrane region" description="Helical" evidence="1">
    <location>
        <begin position="102"/>
        <end position="122"/>
    </location>
</feature>
<feature type="transmembrane region" description="Helical" evidence="1">
    <location>
        <begin position="137"/>
        <end position="157"/>
    </location>
</feature>
<feature type="active site" evidence="1">
    <location>
        <position position="123"/>
    </location>
</feature>
<feature type="active site" evidence="1">
    <location>
        <position position="141"/>
    </location>
</feature>
<dbReference type="EC" id="3.4.23.36" evidence="1"/>
<dbReference type="EMBL" id="AE005174">
    <property type="protein sequence ID" value="AAG54329.1"/>
    <property type="molecule type" value="Genomic_DNA"/>
</dbReference>
<dbReference type="EMBL" id="BA000007">
    <property type="protein sequence ID" value="BAB33453.1"/>
    <property type="molecule type" value="Genomic_DNA"/>
</dbReference>
<dbReference type="PIR" id="E85483">
    <property type="entry name" value="E85483"/>
</dbReference>
<dbReference type="PIR" id="F90632">
    <property type="entry name" value="F90632"/>
</dbReference>
<dbReference type="RefSeq" id="NP_308057.1">
    <property type="nucleotide sequence ID" value="NC_002695.1"/>
</dbReference>
<dbReference type="RefSeq" id="WP_000083385.1">
    <property type="nucleotide sequence ID" value="NZ_VOAI01000002.1"/>
</dbReference>
<dbReference type="SMR" id="Q8XA48"/>
<dbReference type="STRING" id="155864.Z0031"/>
<dbReference type="MEROPS" id="A08.001"/>
<dbReference type="GeneID" id="913426"/>
<dbReference type="KEGG" id="ece:Z0031"/>
<dbReference type="KEGG" id="ecs:ECs_0030"/>
<dbReference type="PATRIC" id="fig|386585.9.peg.125"/>
<dbReference type="eggNOG" id="COG0597">
    <property type="taxonomic scope" value="Bacteria"/>
</dbReference>
<dbReference type="HOGENOM" id="CLU_083252_4_0_6"/>
<dbReference type="OMA" id="NRWYFPA"/>
<dbReference type="UniPathway" id="UPA00665"/>
<dbReference type="Proteomes" id="UP000000558">
    <property type="component" value="Chromosome"/>
</dbReference>
<dbReference type="Proteomes" id="UP000002519">
    <property type="component" value="Chromosome"/>
</dbReference>
<dbReference type="GO" id="GO:0005886">
    <property type="term" value="C:plasma membrane"/>
    <property type="evidence" value="ECO:0007669"/>
    <property type="project" value="UniProtKB-SubCell"/>
</dbReference>
<dbReference type="GO" id="GO:0004190">
    <property type="term" value="F:aspartic-type endopeptidase activity"/>
    <property type="evidence" value="ECO:0007669"/>
    <property type="project" value="UniProtKB-UniRule"/>
</dbReference>
<dbReference type="GO" id="GO:0006508">
    <property type="term" value="P:proteolysis"/>
    <property type="evidence" value="ECO:0007669"/>
    <property type="project" value="UniProtKB-KW"/>
</dbReference>
<dbReference type="HAMAP" id="MF_00161">
    <property type="entry name" value="LspA"/>
    <property type="match status" value="1"/>
</dbReference>
<dbReference type="InterPro" id="IPR001872">
    <property type="entry name" value="Peptidase_A8"/>
</dbReference>
<dbReference type="NCBIfam" id="TIGR00077">
    <property type="entry name" value="lspA"/>
    <property type="match status" value="1"/>
</dbReference>
<dbReference type="PANTHER" id="PTHR33695">
    <property type="entry name" value="LIPOPROTEIN SIGNAL PEPTIDASE"/>
    <property type="match status" value="1"/>
</dbReference>
<dbReference type="PANTHER" id="PTHR33695:SF1">
    <property type="entry name" value="LIPOPROTEIN SIGNAL PEPTIDASE"/>
    <property type="match status" value="1"/>
</dbReference>
<dbReference type="Pfam" id="PF01252">
    <property type="entry name" value="Peptidase_A8"/>
    <property type="match status" value="1"/>
</dbReference>
<dbReference type="PRINTS" id="PR00781">
    <property type="entry name" value="LIPOSIGPTASE"/>
</dbReference>
<dbReference type="PROSITE" id="PS00855">
    <property type="entry name" value="SPASE_II"/>
    <property type="match status" value="1"/>
</dbReference>
<organism>
    <name type="scientific">Escherichia coli O157:H7</name>
    <dbReference type="NCBI Taxonomy" id="83334"/>
    <lineage>
        <taxon>Bacteria</taxon>
        <taxon>Pseudomonadati</taxon>
        <taxon>Pseudomonadota</taxon>
        <taxon>Gammaproteobacteria</taxon>
        <taxon>Enterobacterales</taxon>
        <taxon>Enterobacteriaceae</taxon>
        <taxon>Escherichia</taxon>
    </lineage>
</organism>
<reference key="1">
    <citation type="journal article" date="2001" name="Nature">
        <title>Genome sequence of enterohaemorrhagic Escherichia coli O157:H7.</title>
        <authorList>
            <person name="Perna N.T."/>
            <person name="Plunkett G. III"/>
            <person name="Burland V."/>
            <person name="Mau B."/>
            <person name="Glasner J.D."/>
            <person name="Rose D.J."/>
            <person name="Mayhew G.F."/>
            <person name="Evans P.S."/>
            <person name="Gregor J."/>
            <person name="Kirkpatrick H.A."/>
            <person name="Posfai G."/>
            <person name="Hackett J."/>
            <person name="Klink S."/>
            <person name="Boutin A."/>
            <person name="Shao Y."/>
            <person name="Miller L."/>
            <person name="Grotbeck E.J."/>
            <person name="Davis N.W."/>
            <person name="Lim A."/>
            <person name="Dimalanta E.T."/>
            <person name="Potamousis K."/>
            <person name="Apodaca J."/>
            <person name="Anantharaman T.S."/>
            <person name="Lin J."/>
            <person name="Yen G."/>
            <person name="Schwartz D.C."/>
            <person name="Welch R.A."/>
            <person name="Blattner F.R."/>
        </authorList>
    </citation>
    <scope>NUCLEOTIDE SEQUENCE [LARGE SCALE GENOMIC DNA]</scope>
    <source>
        <strain>O157:H7 / EDL933 / ATCC 700927 / EHEC</strain>
    </source>
</reference>
<reference key="2">
    <citation type="journal article" date="2001" name="DNA Res.">
        <title>Complete genome sequence of enterohemorrhagic Escherichia coli O157:H7 and genomic comparison with a laboratory strain K-12.</title>
        <authorList>
            <person name="Hayashi T."/>
            <person name="Makino K."/>
            <person name="Ohnishi M."/>
            <person name="Kurokawa K."/>
            <person name="Ishii K."/>
            <person name="Yokoyama K."/>
            <person name="Han C.-G."/>
            <person name="Ohtsubo E."/>
            <person name="Nakayama K."/>
            <person name="Murata T."/>
            <person name="Tanaka M."/>
            <person name="Tobe T."/>
            <person name="Iida T."/>
            <person name="Takami H."/>
            <person name="Honda T."/>
            <person name="Sasakawa C."/>
            <person name="Ogasawara N."/>
            <person name="Yasunaga T."/>
            <person name="Kuhara S."/>
            <person name="Shiba T."/>
            <person name="Hattori M."/>
            <person name="Shinagawa H."/>
        </authorList>
    </citation>
    <scope>NUCLEOTIDE SEQUENCE [LARGE SCALE GENOMIC DNA]</scope>
    <source>
        <strain>O157:H7 / Sakai / RIMD 0509952 / EHEC</strain>
    </source>
</reference>
<proteinExistence type="inferred from homology"/>
<gene>
    <name evidence="1" type="primary">lspA</name>
    <name type="ordered locus">Z0031</name>
    <name type="ordered locus">ECs0030</name>
</gene>
<accession>Q8XA48</accession>
<protein>
    <recommendedName>
        <fullName evidence="1">Lipoprotein signal peptidase</fullName>
        <ecNumber evidence="1">3.4.23.36</ecNumber>
    </recommendedName>
    <alternativeName>
        <fullName evidence="1">Prolipoprotein signal peptidase</fullName>
    </alternativeName>
    <alternativeName>
        <fullName evidence="1">Signal peptidase II</fullName>
        <shortName evidence="1">SPase II</shortName>
    </alternativeName>
</protein>
<name>LSPA_ECO57</name>
<comment type="function">
    <text evidence="1">This protein specifically catalyzes the removal of signal peptides from prolipoproteins.</text>
</comment>
<comment type="catalytic activity">
    <reaction evidence="1">
        <text>Release of signal peptides from bacterial membrane prolipoproteins. Hydrolyzes -Xaa-Yaa-Zaa-|-(S,diacylglyceryl)Cys-, in which Xaa is hydrophobic (preferably Leu), and Yaa (Ala or Ser) and Zaa (Gly or Ala) have small, neutral side chains.</text>
        <dbReference type="EC" id="3.4.23.36"/>
    </reaction>
</comment>
<comment type="pathway">
    <text evidence="1">Protein modification; lipoprotein biosynthesis (signal peptide cleavage).</text>
</comment>
<comment type="subcellular location">
    <subcellularLocation>
        <location evidence="1">Cell inner membrane</location>
        <topology evidence="1">Multi-pass membrane protein</topology>
    </subcellularLocation>
</comment>
<comment type="similarity">
    <text evidence="1">Belongs to the peptidase A8 family.</text>
</comment>